<accession>Q5FVW6</accession>
<keyword id="KW-0075">B-cell activation</keyword>
<keyword id="KW-0963">Cytoplasm</keyword>
<keyword id="KW-0597">Phosphoprotein</keyword>
<keyword id="KW-1185">Reference proteome</keyword>
<keyword id="KW-0728">SH3 domain</keyword>
<dbReference type="EMBL" id="BC089739">
    <property type="protein sequence ID" value="AAH89739.1"/>
    <property type="molecule type" value="mRNA"/>
</dbReference>
<dbReference type="SMR" id="Q5FVW6"/>
<dbReference type="FunCoup" id="Q5FVW6">
    <property type="interactions" value="1869"/>
</dbReference>
<dbReference type="STRING" id="8364.ENSXETP00000002925"/>
<dbReference type="PaxDb" id="8364-ENSXETP00000026585"/>
<dbReference type="eggNOG" id="ENOG502QVFD">
    <property type="taxonomic scope" value="Eukaryota"/>
</dbReference>
<dbReference type="HOGENOM" id="CLU_062032_0_0_1"/>
<dbReference type="InParanoid" id="Q5FVW6"/>
<dbReference type="Proteomes" id="UP000008143">
    <property type="component" value="Unplaced"/>
</dbReference>
<dbReference type="Bgee" id="ENSXETG00000012181">
    <property type="expression patterns" value="Expressed in liver and 7 other cell types or tissues"/>
</dbReference>
<dbReference type="ExpressionAtlas" id="Q5FVW6">
    <property type="expression patterns" value="baseline"/>
</dbReference>
<dbReference type="GO" id="GO:0005737">
    <property type="term" value="C:cytoplasm"/>
    <property type="evidence" value="ECO:0007669"/>
    <property type="project" value="UniProtKB-SubCell"/>
</dbReference>
<dbReference type="GO" id="GO:0042113">
    <property type="term" value="P:B cell activation"/>
    <property type="evidence" value="ECO:0007669"/>
    <property type="project" value="UniProtKB-KW"/>
</dbReference>
<dbReference type="CDD" id="cd13381">
    <property type="entry name" value="PH_Skap-hom_Skap2"/>
    <property type="match status" value="1"/>
</dbReference>
<dbReference type="CDD" id="cd12045">
    <property type="entry name" value="SH3_SKAP2"/>
    <property type="match status" value="1"/>
</dbReference>
<dbReference type="FunFam" id="2.30.30.40:FF:000097">
    <property type="entry name" value="Putative src kinase-associated phosphoprotein 2"/>
    <property type="match status" value="1"/>
</dbReference>
<dbReference type="Gene3D" id="6.10.250.220">
    <property type="match status" value="1"/>
</dbReference>
<dbReference type="Gene3D" id="2.30.29.30">
    <property type="entry name" value="Pleckstrin-homology domain (PH domain)/Phosphotyrosine-binding domain (PTB)"/>
    <property type="match status" value="1"/>
</dbReference>
<dbReference type="Gene3D" id="2.30.30.40">
    <property type="entry name" value="SH3 Domains"/>
    <property type="match status" value="1"/>
</dbReference>
<dbReference type="InterPro" id="IPR011993">
    <property type="entry name" value="PH-like_dom_sf"/>
</dbReference>
<dbReference type="InterPro" id="IPR001849">
    <property type="entry name" value="PH_domain"/>
</dbReference>
<dbReference type="InterPro" id="IPR036028">
    <property type="entry name" value="SH3-like_dom_sf"/>
</dbReference>
<dbReference type="InterPro" id="IPR001452">
    <property type="entry name" value="SH3_domain"/>
</dbReference>
<dbReference type="InterPro" id="IPR037781">
    <property type="entry name" value="SKAP_fam"/>
</dbReference>
<dbReference type="PANTHER" id="PTHR15129:SF2">
    <property type="entry name" value="SRC KINASE-ASSOCIATED PHOSPHOPROTEIN 2"/>
    <property type="match status" value="1"/>
</dbReference>
<dbReference type="PANTHER" id="PTHR15129">
    <property type="entry name" value="SRC-ASSOCIATED ADAPTOR PROTEIN"/>
    <property type="match status" value="1"/>
</dbReference>
<dbReference type="Pfam" id="PF00169">
    <property type="entry name" value="PH"/>
    <property type="match status" value="1"/>
</dbReference>
<dbReference type="Pfam" id="PF00018">
    <property type="entry name" value="SH3_1"/>
    <property type="match status" value="1"/>
</dbReference>
<dbReference type="PRINTS" id="PR00452">
    <property type="entry name" value="SH3DOMAIN"/>
</dbReference>
<dbReference type="SMART" id="SM00233">
    <property type="entry name" value="PH"/>
    <property type="match status" value="1"/>
</dbReference>
<dbReference type="SMART" id="SM00326">
    <property type="entry name" value="SH3"/>
    <property type="match status" value="1"/>
</dbReference>
<dbReference type="SUPFAM" id="SSF50729">
    <property type="entry name" value="PH domain-like"/>
    <property type="match status" value="1"/>
</dbReference>
<dbReference type="SUPFAM" id="SSF50044">
    <property type="entry name" value="SH3-domain"/>
    <property type="match status" value="1"/>
</dbReference>
<dbReference type="PROSITE" id="PS50003">
    <property type="entry name" value="PH_DOMAIN"/>
    <property type="match status" value="1"/>
</dbReference>
<dbReference type="PROSITE" id="PS50002">
    <property type="entry name" value="SH3"/>
    <property type="match status" value="1"/>
</dbReference>
<organism>
    <name type="scientific">Xenopus tropicalis</name>
    <name type="common">Western clawed frog</name>
    <name type="synonym">Silurana tropicalis</name>
    <dbReference type="NCBI Taxonomy" id="8364"/>
    <lineage>
        <taxon>Eukaryota</taxon>
        <taxon>Metazoa</taxon>
        <taxon>Chordata</taxon>
        <taxon>Craniata</taxon>
        <taxon>Vertebrata</taxon>
        <taxon>Euteleostomi</taxon>
        <taxon>Amphibia</taxon>
        <taxon>Batrachia</taxon>
        <taxon>Anura</taxon>
        <taxon>Pipoidea</taxon>
        <taxon>Pipidae</taxon>
        <taxon>Xenopodinae</taxon>
        <taxon>Xenopus</taxon>
        <taxon>Silurana</taxon>
    </lineage>
</organism>
<protein>
    <recommendedName>
        <fullName>Src kinase-associated phosphoprotein 2</fullName>
    </recommendedName>
</protein>
<sequence length="328" mass="37863">MNPALPEDVKTLLTDLETFISDVLKGETLSKKAKEKKEVLIKRLKDIKHSHSLEFQAETDDLEENDGFPLPPDAVSIASDRDKDEELPYDGSFYPLVAAQDLEYLRAGYLEKRRKDHSFFASEWQKRWCVCTNSMFYYYGSDKDKQQKGAFSLDGYRAKMNDTLRKDAKKDCCFEIFAPDKRVYQFAASSPKEAEEWVNIIMNSRGNIPTEDEELYDDVNQEVDASHEEDIYEELPEESEKPVTEIETPKATPVPVNNTSGKENTDYANFYRGLWDCTGDHPDELSFKHGDTIYILSKEYNTYGWWVGEMKGTIGLVPKAYIMEMYDI</sequence>
<feature type="chain" id="PRO_0000270187" description="Src kinase-associated phosphoprotein 2">
    <location>
        <begin position="1"/>
        <end position="328"/>
    </location>
</feature>
<feature type="domain" description="PH" evidence="2">
    <location>
        <begin position="103"/>
        <end position="206"/>
    </location>
</feature>
<feature type="domain" description="SH3" evidence="3">
    <location>
        <begin position="266"/>
        <end position="327"/>
    </location>
</feature>
<feature type="region of interest" description="Disordered" evidence="4">
    <location>
        <begin position="231"/>
        <end position="262"/>
    </location>
</feature>
<feature type="compositionally biased region" description="Basic and acidic residues" evidence="4">
    <location>
        <begin position="238"/>
        <end position="248"/>
    </location>
</feature>
<name>SKAP2_XENTR</name>
<comment type="function">
    <text evidence="1">May be involved in B-cell and macrophage adhesion processes. May play a role in src signaling pathway (By similarity).</text>
</comment>
<comment type="subcellular location">
    <subcellularLocation>
        <location evidence="1">Cytoplasm</location>
    </subcellularLocation>
</comment>
<comment type="PTM">
    <text evidence="1">Phosphorylated on tyrosines.</text>
</comment>
<comment type="similarity">
    <text evidence="5">Belongs to the SKAP family.</text>
</comment>
<proteinExistence type="evidence at transcript level"/>
<reference key="1">
    <citation type="submission" date="2005-02" db="EMBL/GenBank/DDBJ databases">
        <authorList>
            <consortium name="NIH - Xenopus Gene Collection (XGC) project"/>
        </authorList>
    </citation>
    <scope>NUCLEOTIDE SEQUENCE [LARGE SCALE MRNA]</scope>
</reference>
<gene>
    <name type="primary">skap2</name>
</gene>
<evidence type="ECO:0000250" key="1"/>
<evidence type="ECO:0000255" key="2">
    <source>
        <dbReference type="PROSITE-ProRule" id="PRU00145"/>
    </source>
</evidence>
<evidence type="ECO:0000255" key="3">
    <source>
        <dbReference type="PROSITE-ProRule" id="PRU00192"/>
    </source>
</evidence>
<evidence type="ECO:0000256" key="4">
    <source>
        <dbReference type="SAM" id="MobiDB-lite"/>
    </source>
</evidence>
<evidence type="ECO:0000305" key="5"/>